<proteinExistence type="inferred from homology"/>
<accession>A4GAH3</accession>
<evidence type="ECO:0000255" key="1">
    <source>
        <dbReference type="HAMAP-Rule" id="MF_01398"/>
    </source>
</evidence>
<keyword id="KW-0066">ATP synthesis</keyword>
<keyword id="KW-0997">Cell inner membrane</keyword>
<keyword id="KW-1003">Cell membrane</keyword>
<keyword id="KW-0138">CF(0)</keyword>
<keyword id="KW-0375">Hydrogen ion transport</keyword>
<keyword id="KW-0406">Ion transport</keyword>
<keyword id="KW-0472">Membrane</keyword>
<keyword id="KW-1185">Reference proteome</keyword>
<keyword id="KW-0812">Transmembrane</keyword>
<keyword id="KW-1133">Transmembrane helix</keyword>
<keyword id="KW-0813">Transport</keyword>
<comment type="function">
    <text evidence="1">F(1)F(0) ATP synthase produces ATP from ADP in the presence of a proton or sodium gradient. F-type ATPases consist of two structural domains, F(1) containing the extramembraneous catalytic core and F(0) containing the membrane proton channel, linked together by a central stalk and a peripheral stalk. During catalysis, ATP synthesis in the catalytic domain of F(1) is coupled via a rotary mechanism of the central stalk subunits to proton translocation.</text>
</comment>
<comment type="function">
    <text evidence="1">Component of the F(0) channel, it forms part of the peripheral stalk, linking F(1) to F(0).</text>
</comment>
<comment type="subunit">
    <text evidence="1">F-type ATPases have 2 components, F(1) - the catalytic core - and F(0) - the membrane proton channel. F(1) has five subunits: alpha(3), beta(3), gamma(1), delta(1), epsilon(1). F(0) has three main subunits: a(1), b(2) and c(10-14). The alpha and beta chains form an alternating ring which encloses part of the gamma chain. F(1) is attached to F(0) by a central stalk formed by the gamma and epsilon chains, while a peripheral stalk is formed by the delta and b chains.</text>
</comment>
<comment type="subcellular location">
    <subcellularLocation>
        <location evidence="1">Cell inner membrane</location>
        <topology evidence="1">Single-pass membrane protein</topology>
    </subcellularLocation>
</comment>
<comment type="similarity">
    <text evidence="1">Belongs to the ATPase B chain family.</text>
</comment>
<feature type="chain" id="PRO_0000368526" description="ATP synthase subunit b">
    <location>
        <begin position="1"/>
        <end position="156"/>
    </location>
</feature>
<feature type="transmembrane region" description="Helical" evidence="1">
    <location>
        <begin position="7"/>
        <end position="27"/>
    </location>
</feature>
<reference key="1">
    <citation type="journal article" date="2007" name="PLoS Genet.">
        <title>A tale of two oxidation states: bacterial colonization of arsenic-rich environments.</title>
        <authorList>
            <person name="Muller D."/>
            <person name="Medigue C."/>
            <person name="Koechler S."/>
            <person name="Barbe V."/>
            <person name="Barakat M."/>
            <person name="Talla E."/>
            <person name="Bonnefoy V."/>
            <person name="Krin E."/>
            <person name="Arsene-Ploetze F."/>
            <person name="Carapito C."/>
            <person name="Chandler M."/>
            <person name="Cournoyer B."/>
            <person name="Cruveiller S."/>
            <person name="Dossat C."/>
            <person name="Duval S."/>
            <person name="Heymann M."/>
            <person name="Leize E."/>
            <person name="Lieutaud A."/>
            <person name="Lievremont D."/>
            <person name="Makita Y."/>
            <person name="Mangenot S."/>
            <person name="Nitschke W."/>
            <person name="Ortet P."/>
            <person name="Perdrial N."/>
            <person name="Schoepp B."/>
            <person name="Siguier P."/>
            <person name="Simeonova D.D."/>
            <person name="Rouy Z."/>
            <person name="Segurens B."/>
            <person name="Turlin E."/>
            <person name="Vallenet D."/>
            <person name="van Dorsselaer A."/>
            <person name="Weiss S."/>
            <person name="Weissenbach J."/>
            <person name="Lett M.-C."/>
            <person name="Danchin A."/>
            <person name="Bertin P.N."/>
        </authorList>
    </citation>
    <scope>NUCLEOTIDE SEQUENCE [LARGE SCALE GENOMIC DNA]</scope>
    <source>
        <strain>ULPAs1</strain>
    </source>
</reference>
<protein>
    <recommendedName>
        <fullName evidence="1">ATP synthase subunit b</fullName>
    </recommendedName>
    <alternativeName>
        <fullName evidence="1">ATP synthase F(0) sector subunit b</fullName>
    </alternativeName>
    <alternativeName>
        <fullName evidence="1">ATPase subunit I</fullName>
    </alternativeName>
    <alternativeName>
        <fullName evidence="1">F-type ATPase subunit b</fullName>
        <shortName evidence="1">F-ATPase subunit b</shortName>
    </alternativeName>
</protein>
<dbReference type="EMBL" id="CU207211">
    <property type="protein sequence ID" value="CAL63510.1"/>
    <property type="molecule type" value="Genomic_DNA"/>
</dbReference>
<dbReference type="SMR" id="A4GAH3"/>
<dbReference type="STRING" id="204773.HEAR3409"/>
<dbReference type="KEGG" id="har:HEAR3409"/>
<dbReference type="eggNOG" id="COG0711">
    <property type="taxonomic scope" value="Bacteria"/>
</dbReference>
<dbReference type="HOGENOM" id="CLU_079215_4_5_4"/>
<dbReference type="OrthoDB" id="9788020at2"/>
<dbReference type="Proteomes" id="UP000006697">
    <property type="component" value="Chromosome"/>
</dbReference>
<dbReference type="GO" id="GO:0005886">
    <property type="term" value="C:plasma membrane"/>
    <property type="evidence" value="ECO:0007669"/>
    <property type="project" value="UniProtKB-SubCell"/>
</dbReference>
<dbReference type="GO" id="GO:0045259">
    <property type="term" value="C:proton-transporting ATP synthase complex"/>
    <property type="evidence" value="ECO:0007669"/>
    <property type="project" value="UniProtKB-KW"/>
</dbReference>
<dbReference type="GO" id="GO:0046933">
    <property type="term" value="F:proton-transporting ATP synthase activity, rotational mechanism"/>
    <property type="evidence" value="ECO:0007669"/>
    <property type="project" value="UniProtKB-UniRule"/>
</dbReference>
<dbReference type="GO" id="GO:0046961">
    <property type="term" value="F:proton-transporting ATPase activity, rotational mechanism"/>
    <property type="evidence" value="ECO:0007669"/>
    <property type="project" value="TreeGrafter"/>
</dbReference>
<dbReference type="CDD" id="cd06503">
    <property type="entry name" value="ATP-synt_Fo_b"/>
    <property type="match status" value="1"/>
</dbReference>
<dbReference type="Gene3D" id="6.10.250.1580">
    <property type="match status" value="1"/>
</dbReference>
<dbReference type="HAMAP" id="MF_01398">
    <property type="entry name" value="ATP_synth_b_bprime"/>
    <property type="match status" value="1"/>
</dbReference>
<dbReference type="InterPro" id="IPR028987">
    <property type="entry name" value="ATP_synth_B-like_membr_sf"/>
</dbReference>
<dbReference type="InterPro" id="IPR002146">
    <property type="entry name" value="ATP_synth_b/b'su_bac/chlpt"/>
</dbReference>
<dbReference type="InterPro" id="IPR005864">
    <property type="entry name" value="ATP_synth_F0_bsu_bac"/>
</dbReference>
<dbReference type="InterPro" id="IPR050059">
    <property type="entry name" value="ATP_synthase_B_chain"/>
</dbReference>
<dbReference type="NCBIfam" id="TIGR01144">
    <property type="entry name" value="ATP_synt_b"/>
    <property type="match status" value="1"/>
</dbReference>
<dbReference type="NCBIfam" id="NF004411">
    <property type="entry name" value="PRK05759.1-2"/>
    <property type="match status" value="1"/>
</dbReference>
<dbReference type="PANTHER" id="PTHR33445:SF1">
    <property type="entry name" value="ATP SYNTHASE SUBUNIT B"/>
    <property type="match status" value="1"/>
</dbReference>
<dbReference type="PANTHER" id="PTHR33445">
    <property type="entry name" value="ATP SYNTHASE SUBUNIT B', CHLOROPLASTIC"/>
    <property type="match status" value="1"/>
</dbReference>
<dbReference type="Pfam" id="PF00430">
    <property type="entry name" value="ATP-synt_B"/>
    <property type="match status" value="1"/>
</dbReference>
<dbReference type="SUPFAM" id="SSF81573">
    <property type="entry name" value="F1F0 ATP synthase subunit B, membrane domain"/>
    <property type="match status" value="1"/>
</dbReference>
<organism>
    <name type="scientific">Herminiimonas arsenicoxydans</name>
    <dbReference type="NCBI Taxonomy" id="204773"/>
    <lineage>
        <taxon>Bacteria</taxon>
        <taxon>Pseudomonadati</taxon>
        <taxon>Pseudomonadota</taxon>
        <taxon>Betaproteobacteria</taxon>
        <taxon>Burkholderiales</taxon>
        <taxon>Oxalobacteraceae</taxon>
        <taxon>Herminiimonas</taxon>
    </lineage>
</organism>
<name>ATPF_HERAR</name>
<sequence length="156" mass="16824">MNLNATLIAQFVVFFILAGFTMKFVWPPLMNALDERAKKIADGLAAAERGKSDLAAAEKRAQAELTSAQEAGQKRIGDAEKRGQSIIDEAKKTAAEEAARIIATAKADADQQVTQVREALRDQVATLAVKGAEQILKREVNAAVHADLLNQLKAEL</sequence>
<gene>
    <name evidence="1" type="primary">atpF</name>
    <name type="ordered locus">HEAR3409</name>
</gene>